<sequence length="225" mass="26032">MVMAEGTAVLRRNRPGTKAQDFYNWPDESFDEMDSTLAVQQYIQQNIRADCSNIDKILEPPEGQDEGVWKYEHLRQFCLELNGLAVKLQSECHPDTCTQMTATEQWIFLCAAHKTPKECPAIDYTRHTLDGAACLLNSNKYFPSRVSIKESSVAKLGSVCRRIYRIFSHAYFHHRQIFDEYENETFLCHRFTKFVMKYNLMSKDNLIVPILEEEVQNSVSGESEA</sequence>
<gene>
    <name type="primary">Mob4</name>
    <name type="synonym">Mob3</name>
    <name type="synonym">Mobkl3</name>
    <name type="synonym">Phocn</name>
    <name type="synonym">Prei3</name>
</gene>
<accession>Q6PEB6</accession>
<accession>Q3TS21</accession>
<accession>Q8BSA3</accession>
<accession>Q9CX28</accession>
<name>PHOCN_MOUSE</name>
<proteinExistence type="evidence at protein level"/>
<organism>
    <name type="scientific">Mus musculus</name>
    <name type="common">Mouse</name>
    <dbReference type="NCBI Taxonomy" id="10090"/>
    <lineage>
        <taxon>Eukaryota</taxon>
        <taxon>Metazoa</taxon>
        <taxon>Chordata</taxon>
        <taxon>Craniata</taxon>
        <taxon>Vertebrata</taxon>
        <taxon>Euteleostomi</taxon>
        <taxon>Mammalia</taxon>
        <taxon>Eutheria</taxon>
        <taxon>Euarchontoglires</taxon>
        <taxon>Glires</taxon>
        <taxon>Rodentia</taxon>
        <taxon>Myomorpha</taxon>
        <taxon>Muroidea</taxon>
        <taxon>Muridae</taxon>
        <taxon>Murinae</taxon>
        <taxon>Mus</taxon>
        <taxon>Mus</taxon>
    </lineage>
</organism>
<comment type="function">
    <text evidence="2">Part of the striatin-interacting phosphatase and kinase (STRIPAK) complexes. STRIPAK complexes have critical roles in protein (de)phosphorylation and are regulators of multiple signaling pathways including Hippo, MAPK, nuclear receptor and cytoskeleton remodeling. Different types of STRIPAK complexes are involved in a variety of biological processes such as cell growth, differentiation, apoptosis, metabolism and immune regulation.</text>
</comment>
<comment type="subunit">
    <text evidence="1 2">Binds STRN4 (By similarity). Interacts with DNM1 and EPS15 (By similarity). Interacts with nucleoside diphosphate kinase (By similarity). Interacts with CTTNBP2 (By similarity). Interacts with CTTNBP2NL (By similarity). Part of the core of STRIPAK complexes composed of PP2A catalytic and scaffolding subunits, the striatins (PP2A regulatory subunits), the striatin-associated proteins MOB4, STRIP1 and STRIP2, PDCD10 and members of the STE20 kinases, such as STK24 and STK26 (By similarity).</text>
</comment>
<comment type="subcellular location">
    <subcellularLocation>
        <location evidence="3">Cytoplasm</location>
        <location evidence="3">Perinuclear region</location>
    </subcellularLocation>
    <subcellularLocation>
        <location evidence="3">Membrane</location>
        <topology evidence="3">Peripheral membrane protein</topology>
    </subcellularLocation>
    <subcellularLocation>
        <location evidence="3">Golgi apparatus</location>
        <location evidence="3">Golgi stack membrane</location>
        <topology evidence="3">Peripheral membrane protein</topology>
    </subcellularLocation>
    <text>In a perinuclear punctate pattern. Associated with membranes and the Golgi stacks.</text>
</comment>
<comment type="PTM">
    <text evidence="3">Phosphorylated on serine residues.</text>
</comment>
<comment type="similarity">
    <text evidence="4">Belongs to the MOB1/phocein family.</text>
</comment>
<evidence type="ECO:0000250" key="1"/>
<evidence type="ECO:0000250" key="2">
    <source>
        <dbReference type="UniProtKB" id="Q9Y3A3"/>
    </source>
</evidence>
<evidence type="ECO:0000269" key="3">
    <source>
    </source>
</evidence>
<evidence type="ECO:0000305" key="4"/>
<feature type="chain" id="PRO_0000193577" description="MOB-like protein phocein">
    <location>
        <begin position="1"/>
        <end position="225"/>
    </location>
</feature>
<feature type="binding site" evidence="2">
    <location>
        <position position="92"/>
    </location>
    <ligand>
        <name>Zn(2+)</name>
        <dbReference type="ChEBI" id="CHEBI:29105"/>
        <label>1</label>
    </ligand>
</feature>
<feature type="binding site" evidence="1">
    <location>
        <position position="92"/>
    </location>
    <ligand>
        <name>Zn(2+)</name>
        <dbReference type="ChEBI" id="CHEBI:29105"/>
    </ligand>
</feature>
<feature type="binding site" evidence="2">
    <location>
        <position position="97"/>
    </location>
    <ligand>
        <name>Zn(2+)</name>
        <dbReference type="ChEBI" id="CHEBI:29105"/>
        <label>1</label>
    </ligand>
</feature>
<feature type="binding site" evidence="1">
    <location>
        <position position="97"/>
    </location>
    <ligand>
        <name>Zn(2+)</name>
        <dbReference type="ChEBI" id="CHEBI:29105"/>
    </ligand>
</feature>
<feature type="binding site" evidence="2">
    <location>
        <position position="110"/>
    </location>
    <ligand>
        <name>Zn(2+)</name>
        <dbReference type="ChEBI" id="CHEBI:29105"/>
        <label>2</label>
    </ligand>
</feature>
<feature type="binding site" evidence="2">
    <location>
        <position position="113"/>
    </location>
    <ligand>
        <name>Zn(2+)</name>
        <dbReference type="ChEBI" id="CHEBI:29105"/>
        <label>2</label>
    </ligand>
</feature>
<feature type="binding site" evidence="2">
    <location>
        <position position="119"/>
    </location>
    <ligand>
        <name>Zn(2+)</name>
        <dbReference type="ChEBI" id="CHEBI:29105"/>
        <label>2</label>
    </ligand>
</feature>
<feature type="binding site" evidence="2">
    <location>
        <position position="127"/>
    </location>
    <ligand>
        <name>Zn(2+)</name>
        <dbReference type="ChEBI" id="CHEBI:29105"/>
        <label>2</label>
    </ligand>
</feature>
<feature type="binding site" evidence="2">
    <location>
        <position position="169"/>
    </location>
    <ligand>
        <name>Zn(2+)</name>
        <dbReference type="ChEBI" id="CHEBI:29105"/>
        <label>1</label>
    </ligand>
</feature>
<feature type="binding site" evidence="1">
    <location>
        <position position="169"/>
    </location>
    <ligand>
        <name>Zn(2+)</name>
        <dbReference type="ChEBI" id="CHEBI:29105"/>
    </ligand>
</feature>
<feature type="binding site" evidence="2">
    <location>
        <position position="174"/>
    </location>
    <ligand>
        <name>Zn(2+)</name>
        <dbReference type="ChEBI" id="CHEBI:29105"/>
        <label>1</label>
    </ligand>
</feature>
<feature type="binding site" evidence="1">
    <location>
        <position position="174"/>
    </location>
    <ligand>
        <name>Zn(2+)</name>
        <dbReference type="ChEBI" id="CHEBI:29105"/>
    </ligand>
</feature>
<feature type="sequence conflict" description="In Ref. 1; BAB32105." evidence="4" ref="1">
    <original>F</original>
    <variation>S</variation>
    <location>
        <position position="142"/>
    </location>
</feature>
<keyword id="KW-0963">Cytoplasm</keyword>
<keyword id="KW-0333">Golgi apparatus</keyword>
<keyword id="KW-0472">Membrane</keyword>
<keyword id="KW-0479">Metal-binding</keyword>
<keyword id="KW-0597">Phosphoprotein</keyword>
<keyword id="KW-1185">Reference proteome</keyword>
<keyword id="KW-0813">Transport</keyword>
<keyword id="KW-0862">Zinc</keyword>
<dbReference type="EMBL" id="AK020446">
    <property type="protein sequence ID" value="BAB32105.1"/>
    <property type="molecule type" value="mRNA"/>
</dbReference>
<dbReference type="EMBL" id="AK034840">
    <property type="protein sequence ID" value="BAC28849.1"/>
    <property type="molecule type" value="mRNA"/>
</dbReference>
<dbReference type="EMBL" id="AK162327">
    <property type="protein sequence ID" value="BAE36855.1"/>
    <property type="molecule type" value="mRNA"/>
</dbReference>
<dbReference type="EMBL" id="BC037499">
    <property type="protein sequence ID" value="AAH37499.1"/>
    <property type="molecule type" value="mRNA"/>
</dbReference>
<dbReference type="EMBL" id="BC058168">
    <property type="protein sequence ID" value="AAH58168.1"/>
    <property type="molecule type" value="mRNA"/>
</dbReference>
<dbReference type="CCDS" id="CCDS14960.1"/>
<dbReference type="RefSeq" id="NP_079559.2">
    <property type="nucleotide sequence ID" value="NM_025283.3"/>
</dbReference>
<dbReference type="SMR" id="Q6PEB6"/>
<dbReference type="BioGRID" id="202356">
    <property type="interactions" value="6"/>
</dbReference>
<dbReference type="FunCoup" id="Q6PEB6">
    <property type="interactions" value="2488"/>
</dbReference>
<dbReference type="IntAct" id="Q6PEB6">
    <property type="interactions" value="2"/>
</dbReference>
<dbReference type="STRING" id="10090.ENSMUSP00000125415"/>
<dbReference type="iPTMnet" id="Q6PEB6"/>
<dbReference type="PhosphoSitePlus" id="Q6PEB6"/>
<dbReference type="SwissPalm" id="Q6PEB6"/>
<dbReference type="PaxDb" id="10090-ENSMUSP00000125415"/>
<dbReference type="ProteomicsDB" id="288145"/>
<dbReference type="Pumba" id="Q6PEB6"/>
<dbReference type="DNASU" id="19070"/>
<dbReference type="Ensembl" id="ENSMUST00000162364.8">
    <property type="protein sequence ID" value="ENSMUSP00000125415.2"/>
    <property type="gene ID" value="ENSMUSG00000025979.14"/>
</dbReference>
<dbReference type="GeneID" id="19070"/>
<dbReference type="KEGG" id="mmu:19070"/>
<dbReference type="UCSC" id="uc007bad.1">
    <property type="organism name" value="mouse"/>
</dbReference>
<dbReference type="AGR" id="MGI:104899"/>
<dbReference type="CTD" id="25843"/>
<dbReference type="MGI" id="MGI:104899">
    <property type="gene designation" value="Mob4"/>
</dbReference>
<dbReference type="VEuPathDB" id="HostDB:ENSMUSG00000025979"/>
<dbReference type="eggNOG" id="KOG1852">
    <property type="taxonomic scope" value="Eukaryota"/>
</dbReference>
<dbReference type="GeneTree" id="ENSGT01120000271909"/>
<dbReference type="InParanoid" id="Q6PEB6"/>
<dbReference type="OMA" id="ATCTQMT"/>
<dbReference type="OrthoDB" id="184876at2759"/>
<dbReference type="PhylomeDB" id="Q6PEB6"/>
<dbReference type="TreeFam" id="TF314078"/>
<dbReference type="BioGRID-ORCS" id="19070">
    <property type="hits" value="22 hits in 75 CRISPR screens"/>
</dbReference>
<dbReference type="ChiTaRS" id="Mob4">
    <property type="organism name" value="mouse"/>
</dbReference>
<dbReference type="PRO" id="PR:Q6PEB6"/>
<dbReference type="Proteomes" id="UP000000589">
    <property type="component" value="Chromosome 1"/>
</dbReference>
<dbReference type="RNAct" id="Q6PEB6">
    <property type="molecule type" value="protein"/>
</dbReference>
<dbReference type="Bgee" id="ENSMUSG00000025979">
    <property type="expression patterns" value="Expressed in dorsal pancreas and 251 other cell types or tissues"/>
</dbReference>
<dbReference type="ExpressionAtlas" id="Q6PEB6">
    <property type="expression patterns" value="baseline and differential"/>
</dbReference>
<dbReference type="GO" id="GO:0005737">
    <property type="term" value="C:cytoplasm"/>
    <property type="evidence" value="ECO:0000250"/>
    <property type="project" value="UniProtKB"/>
</dbReference>
<dbReference type="GO" id="GO:0090443">
    <property type="term" value="C:FAR/SIN/STRIPAK complex"/>
    <property type="evidence" value="ECO:0000250"/>
    <property type="project" value="UniProtKB"/>
</dbReference>
<dbReference type="GO" id="GO:0098978">
    <property type="term" value="C:glutamatergic synapse"/>
    <property type="evidence" value="ECO:0000314"/>
    <property type="project" value="SynGO"/>
</dbReference>
<dbReference type="GO" id="GO:0005794">
    <property type="term" value="C:Golgi apparatus"/>
    <property type="evidence" value="ECO:0000250"/>
    <property type="project" value="UniProtKB"/>
</dbReference>
<dbReference type="GO" id="GO:0032580">
    <property type="term" value="C:Golgi cisterna membrane"/>
    <property type="evidence" value="ECO:0007669"/>
    <property type="project" value="UniProtKB-SubCell"/>
</dbReference>
<dbReference type="GO" id="GO:0048471">
    <property type="term" value="C:perinuclear region of cytoplasm"/>
    <property type="evidence" value="ECO:0007669"/>
    <property type="project" value="UniProtKB-SubCell"/>
</dbReference>
<dbReference type="GO" id="GO:0098794">
    <property type="term" value="C:postsynapse"/>
    <property type="evidence" value="ECO:0000314"/>
    <property type="project" value="SynGO"/>
</dbReference>
<dbReference type="GO" id="GO:0019900">
    <property type="term" value="F:kinase binding"/>
    <property type="evidence" value="ECO:0000250"/>
    <property type="project" value="UniProtKB"/>
</dbReference>
<dbReference type="GO" id="GO:0046872">
    <property type="term" value="F:metal ion binding"/>
    <property type="evidence" value="ECO:0007669"/>
    <property type="project" value="UniProtKB-KW"/>
</dbReference>
<dbReference type="GO" id="GO:0030674">
    <property type="term" value="F:protein-macromolecule adaptor activity"/>
    <property type="evidence" value="ECO:0000250"/>
    <property type="project" value="UniProtKB"/>
</dbReference>
<dbReference type="GO" id="GO:0035331">
    <property type="term" value="P:negative regulation of hippo signaling"/>
    <property type="evidence" value="ECO:0000250"/>
    <property type="project" value="UniProtKB"/>
</dbReference>
<dbReference type="FunFam" id="1.20.140.30:FF:000002">
    <property type="entry name" value="MOB-like protein phocein isoform X1"/>
    <property type="match status" value="1"/>
</dbReference>
<dbReference type="Gene3D" id="1.20.140.30">
    <property type="entry name" value="MOB kinase activator"/>
    <property type="match status" value="1"/>
</dbReference>
<dbReference type="InterPro" id="IPR005301">
    <property type="entry name" value="MOB_kinase_act_fam"/>
</dbReference>
<dbReference type="InterPro" id="IPR036703">
    <property type="entry name" value="MOB_kinase_act_sf"/>
</dbReference>
<dbReference type="PANTHER" id="PTHR22599">
    <property type="entry name" value="MPS ONE BINDER KINASE ACTIVATOR-LIKE MOB"/>
    <property type="match status" value="1"/>
</dbReference>
<dbReference type="Pfam" id="PF03637">
    <property type="entry name" value="Mob1_phocein"/>
    <property type="match status" value="1"/>
</dbReference>
<dbReference type="SMART" id="SM01388">
    <property type="entry name" value="Mob1_phocein"/>
    <property type="match status" value="1"/>
</dbReference>
<dbReference type="SUPFAM" id="SSF101152">
    <property type="entry name" value="Mob1/phocein"/>
    <property type="match status" value="1"/>
</dbReference>
<protein>
    <recommendedName>
        <fullName>MOB-like protein phocein</fullName>
    </recommendedName>
    <alternativeName>
        <fullName>Class II mMOB1</fullName>
    </alternativeName>
    <alternativeName>
        <fullName>Mob1 homolog 3</fullName>
        <shortName>Mob3</shortName>
    </alternativeName>
    <alternativeName>
        <fullName>Mps one binder kinase activator-like 3</fullName>
    </alternativeName>
    <alternativeName>
        <fullName>Preimplantation protein 3</fullName>
    </alternativeName>
</protein>
<reference key="1">
    <citation type="journal article" date="2005" name="Science">
        <title>The transcriptional landscape of the mammalian genome.</title>
        <authorList>
            <person name="Carninci P."/>
            <person name="Kasukawa T."/>
            <person name="Katayama S."/>
            <person name="Gough J."/>
            <person name="Frith M.C."/>
            <person name="Maeda N."/>
            <person name="Oyama R."/>
            <person name="Ravasi T."/>
            <person name="Lenhard B."/>
            <person name="Wells C."/>
            <person name="Kodzius R."/>
            <person name="Shimokawa K."/>
            <person name="Bajic V.B."/>
            <person name="Brenner S.E."/>
            <person name="Batalov S."/>
            <person name="Forrest A.R."/>
            <person name="Zavolan M."/>
            <person name="Davis M.J."/>
            <person name="Wilming L.G."/>
            <person name="Aidinis V."/>
            <person name="Allen J.E."/>
            <person name="Ambesi-Impiombato A."/>
            <person name="Apweiler R."/>
            <person name="Aturaliya R.N."/>
            <person name="Bailey T.L."/>
            <person name="Bansal M."/>
            <person name="Baxter L."/>
            <person name="Beisel K.W."/>
            <person name="Bersano T."/>
            <person name="Bono H."/>
            <person name="Chalk A.M."/>
            <person name="Chiu K.P."/>
            <person name="Choudhary V."/>
            <person name="Christoffels A."/>
            <person name="Clutterbuck D.R."/>
            <person name="Crowe M.L."/>
            <person name="Dalla E."/>
            <person name="Dalrymple B.P."/>
            <person name="de Bono B."/>
            <person name="Della Gatta G."/>
            <person name="di Bernardo D."/>
            <person name="Down T."/>
            <person name="Engstrom P."/>
            <person name="Fagiolini M."/>
            <person name="Faulkner G."/>
            <person name="Fletcher C.F."/>
            <person name="Fukushima T."/>
            <person name="Furuno M."/>
            <person name="Futaki S."/>
            <person name="Gariboldi M."/>
            <person name="Georgii-Hemming P."/>
            <person name="Gingeras T.R."/>
            <person name="Gojobori T."/>
            <person name="Green R.E."/>
            <person name="Gustincich S."/>
            <person name="Harbers M."/>
            <person name="Hayashi Y."/>
            <person name="Hensch T.K."/>
            <person name="Hirokawa N."/>
            <person name="Hill D."/>
            <person name="Huminiecki L."/>
            <person name="Iacono M."/>
            <person name="Ikeo K."/>
            <person name="Iwama A."/>
            <person name="Ishikawa T."/>
            <person name="Jakt M."/>
            <person name="Kanapin A."/>
            <person name="Katoh M."/>
            <person name="Kawasawa Y."/>
            <person name="Kelso J."/>
            <person name="Kitamura H."/>
            <person name="Kitano H."/>
            <person name="Kollias G."/>
            <person name="Krishnan S.P."/>
            <person name="Kruger A."/>
            <person name="Kummerfeld S.K."/>
            <person name="Kurochkin I.V."/>
            <person name="Lareau L.F."/>
            <person name="Lazarevic D."/>
            <person name="Lipovich L."/>
            <person name="Liu J."/>
            <person name="Liuni S."/>
            <person name="McWilliam S."/>
            <person name="Madan Babu M."/>
            <person name="Madera M."/>
            <person name="Marchionni L."/>
            <person name="Matsuda H."/>
            <person name="Matsuzawa S."/>
            <person name="Miki H."/>
            <person name="Mignone F."/>
            <person name="Miyake S."/>
            <person name="Morris K."/>
            <person name="Mottagui-Tabar S."/>
            <person name="Mulder N."/>
            <person name="Nakano N."/>
            <person name="Nakauchi H."/>
            <person name="Ng P."/>
            <person name="Nilsson R."/>
            <person name="Nishiguchi S."/>
            <person name="Nishikawa S."/>
            <person name="Nori F."/>
            <person name="Ohara O."/>
            <person name="Okazaki Y."/>
            <person name="Orlando V."/>
            <person name="Pang K.C."/>
            <person name="Pavan W.J."/>
            <person name="Pavesi G."/>
            <person name="Pesole G."/>
            <person name="Petrovsky N."/>
            <person name="Piazza S."/>
            <person name="Reed J."/>
            <person name="Reid J.F."/>
            <person name="Ring B.Z."/>
            <person name="Ringwald M."/>
            <person name="Rost B."/>
            <person name="Ruan Y."/>
            <person name="Salzberg S.L."/>
            <person name="Sandelin A."/>
            <person name="Schneider C."/>
            <person name="Schoenbach C."/>
            <person name="Sekiguchi K."/>
            <person name="Semple C.A."/>
            <person name="Seno S."/>
            <person name="Sessa L."/>
            <person name="Sheng Y."/>
            <person name="Shibata Y."/>
            <person name="Shimada H."/>
            <person name="Shimada K."/>
            <person name="Silva D."/>
            <person name="Sinclair B."/>
            <person name="Sperling S."/>
            <person name="Stupka E."/>
            <person name="Sugiura K."/>
            <person name="Sultana R."/>
            <person name="Takenaka Y."/>
            <person name="Taki K."/>
            <person name="Tammoja K."/>
            <person name="Tan S.L."/>
            <person name="Tang S."/>
            <person name="Taylor M.S."/>
            <person name="Tegner J."/>
            <person name="Teichmann S.A."/>
            <person name="Ueda H.R."/>
            <person name="van Nimwegen E."/>
            <person name="Verardo R."/>
            <person name="Wei C.L."/>
            <person name="Yagi K."/>
            <person name="Yamanishi H."/>
            <person name="Zabarovsky E."/>
            <person name="Zhu S."/>
            <person name="Zimmer A."/>
            <person name="Hide W."/>
            <person name="Bult C."/>
            <person name="Grimmond S.M."/>
            <person name="Teasdale R.D."/>
            <person name="Liu E.T."/>
            <person name="Brusic V."/>
            <person name="Quackenbush J."/>
            <person name="Wahlestedt C."/>
            <person name="Mattick J.S."/>
            <person name="Hume D.A."/>
            <person name="Kai C."/>
            <person name="Sasaki D."/>
            <person name="Tomaru Y."/>
            <person name="Fukuda S."/>
            <person name="Kanamori-Katayama M."/>
            <person name="Suzuki M."/>
            <person name="Aoki J."/>
            <person name="Arakawa T."/>
            <person name="Iida J."/>
            <person name="Imamura K."/>
            <person name="Itoh M."/>
            <person name="Kato T."/>
            <person name="Kawaji H."/>
            <person name="Kawagashira N."/>
            <person name="Kawashima T."/>
            <person name="Kojima M."/>
            <person name="Kondo S."/>
            <person name="Konno H."/>
            <person name="Nakano K."/>
            <person name="Ninomiya N."/>
            <person name="Nishio T."/>
            <person name="Okada M."/>
            <person name="Plessy C."/>
            <person name="Shibata K."/>
            <person name="Shiraki T."/>
            <person name="Suzuki S."/>
            <person name="Tagami M."/>
            <person name="Waki K."/>
            <person name="Watahiki A."/>
            <person name="Okamura-Oho Y."/>
            <person name="Suzuki H."/>
            <person name="Kawai J."/>
            <person name="Hayashizaki Y."/>
        </authorList>
    </citation>
    <scope>NUCLEOTIDE SEQUENCE [LARGE SCALE MRNA]</scope>
    <source>
        <strain>C57BL/6J</strain>
        <tissue>Cecum</tissue>
        <tissue>Embryo</tissue>
    </source>
</reference>
<reference key="2">
    <citation type="journal article" date="2004" name="Genome Res.">
        <title>The status, quality, and expansion of the NIH full-length cDNA project: the Mammalian Gene Collection (MGC).</title>
        <authorList>
            <consortium name="The MGC Project Team"/>
        </authorList>
    </citation>
    <scope>NUCLEOTIDE SEQUENCE [LARGE SCALE MRNA]</scope>
    <source>
        <strain>NMRI</strain>
        <tissue>Mammary gland</tissue>
        <tissue>Mammary tumor</tissue>
    </source>
</reference>
<reference key="3">
    <citation type="journal article" date="2001" name="J. Biol. Chem.">
        <title>A mammalian homolog of yeast MOB1 is both a member and a putative substrate of striatin family-protein phosphatase 2A complexes.</title>
        <authorList>
            <person name="Moreno C.S."/>
            <person name="Lane W.S."/>
            <person name="Pallas D.C."/>
        </authorList>
    </citation>
    <scope>INTERACTION WITH STRN; STRN3 AND THE PPA2 COMPLEX</scope>
    <scope>PHOSPHORYLATION</scope>
    <scope>SUBCELLULAR LOCATION</scope>
</reference>
<reference key="4">
    <citation type="journal article" date="2010" name="Cell">
        <title>A tissue-specific atlas of mouse protein phosphorylation and expression.</title>
        <authorList>
            <person name="Huttlin E.L."/>
            <person name="Jedrychowski M.P."/>
            <person name="Elias J.E."/>
            <person name="Goswami T."/>
            <person name="Rad R."/>
            <person name="Beausoleil S.A."/>
            <person name="Villen J."/>
            <person name="Haas W."/>
            <person name="Sowa M.E."/>
            <person name="Gygi S.P."/>
        </authorList>
    </citation>
    <scope>IDENTIFICATION BY MASS SPECTROMETRY [LARGE SCALE ANALYSIS]</scope>
    <source>
        <tissue>Brain</tissue>
        <tissue>Brown adipose tissue</tissue>
        <tissue>Heart</tissue>
        <tissue>Kidney</tissue>
        <tissue>Liver</tissue>
        <tissue>Lung</tissue>
        <tissue>Pancreas</tissue>
        <tissue>Spleen</tissue>
        <tissue>Testis</tissue>
    </source>
</reference>